<evidence type="ECO:0000250" key="1"/>
<evidence type="ECO:0000255" key="2"/>
<evidence type="ECO:0000255" key="3">
    <source>
        <dbReference type="PROSITE-ProRule" id="PRU00500"/>
    </source>
</evidence>
<evidence type="ECO:0000255" key="4">
    <source>
        <dbReference type="PROSITE-ProRule" id="PRU00653"/>
    </source>
</evidence>
<evidence type="ECO:0000256" key="5">
    <source>
        <dbReference type="SAM" id="MobiDB-lite"/>
    </source>
</evidence>
<evidence type="ECO:0000269" key="6">
    <source>
    </source>
</evidence>
<name>IBP2_CHICK</name>
<protein>
    <recommendedName>
        <fullName>Insulin-like growth factor-binding protein 2</fullName>
        <shortName>IBP-2</shortName>
        <shortName>IGF-binding protein 2</shortName>
        <shortName>IGFBP-2</shortName>
    </recommendedName>
</protein>
<accession>P49705</accession>
<reference key="1">
    <citation type="journal article" date="1995" name="J. Mol. Endocrinol.">
        <title>Cloning and characterization of a chick embryo cDNA and gene for IGF-binding protein-2.</title>
        <authorList>
            <person name="Schoen T.J."/>
            <person name="Mazuruk K."/>
            <person name="Waldbillig R.J."/>
            <person name="Potts J."/>
            <person name="Beebe D.C."/>
            <person name="Chader G.J."/>
            <person name="Rodriguez I.R."/>
        </authorList>
    </citation>
    <scope>NUCLEOTIDE SEQUENCE [MRNA]</scope>
    <scope>DEVELOPMENTAL STAGE</scope>
    <source>
        <tissue>Embryonic retina</tissue>
    </source>
</reference>
<sequence>MALGGVGRGGAARAAWPRLLLAALAPALALAGPALPEVLFRCPPCTAERLAACSPAARPPCPELVREPGCGCCPVCARLEDEACGVYTPRCAAGLRCYPDPGAELPPQALVQGQGTCARPPDTDEYGASTEPPADNGDDRSESILAENHVDSTGGMMSGASSRKPLKTGMKEMPVMREKVNEQQRQMGKVGKAHHNHEDSKKSRMPTGRTPCQQELDQVLERISTMRLPDERGPLEHLYSLHIPNCDKHGLYNLKQCKMSVNGQRGECWCVDPIHGKVIQGAPTIRGDPECHLFYTAHEQEDRGAHALRSQ</sequence>
<dbReference type="EMBL" id="U15086">
    <property type="protein sequence ID" value="AAA92885.1"/>
    <property type="molecule type" value="mRNA"/>
</dbReference>
<dbReference type="RefSeq" id="NP_990690.1">
    <property type="nucleotide sequence ID" value="NM_205359.1"/>
</dbReference>
<dbReference type="SMR" id="P49705"/>
<dbReference type="FunCoup" id="P49705">
    <property type="interactions" value="48"/>
</dbReference>
<dbReference type="STRING" id="9031.ENSGALP00000018675"/>
<dbReference type="MEROPS" id="I31.953"/>
<dbReference type="PaxDb" id="9031-ENSGALP00000018675"/>
<dbReference type="GeneID" id="396315"/>
<dbReference type="KEGG" id="gga:396315"/>
<dbReference type="CTD" id="3485"/>
<dbReference type="VEuPathDB" id="HostDB:geneid_396315"/>
<dbReference type="eggNOG" id="ENOG502QRWQ">
    <property type="taxonomic scope" value="Eukaryota"/>
</dbReference>
<dbReference type="InParanoid" id="P49705"/>
<dbReference type="OrthoDB" id="9984807at2759"/>
<dbReference type="PhylomeDB" id="P49705"/>
<dbReference type="PRO" id="PR:P49705"/>
<dbReference type="Proteomes" id="UP000000539">
    <property type="component" value="Unassembled WGS sequence"/>
</dbReference>
<dbReference type="GO" id="GO:0005576">
    <property type="term" value="C:extracellular region"/>
    <property type="evidence" value="ECO:0000250"/>
    <property type="project" value="UniProtKB"/>
</dbReference>
<dbReference type="GO" id="GO:0005615">
    <property type="term" value="C:extracellular space"/>
    <property type="evidence" value="ECO:0000318"/>
    <property type="project" value="GO_Central"/>
</dbReference>
<dbReference type="GO" id="GO:0031994">
    <property type="term" value="F:insulin-like growth factor I binding"/>
    <property type="evidence" value="ECO:0000250"/>
    <property type="project" value="UniProtKB"/>
</dbReference>
<dbReference type="GO" id="GO:0031995">
    <property type="term" value="F:insulin-like growth factor II binding"/>
    <property type="evidence" value="ECO:0000250"/>
    <property type="project" value="UniProtKB"/>
</dbReference>
<dbReference type="GO" id="GO:0043567">
    <property type="term" value="P:regulation of insulin-like growth factor receptor signaling pathway"/>
    <property type="evidence" value="ECO:0000250"/>
    <property type="project" value="UniProtKB"/>
</dbReference>
<dbReference type="CDD" id="cd00191">
    <property type="entry name" value="TY"/>
    <property type="match status" value="1"/>
</dbReference>
<dbReference type="FunFam" id="4.10.40.20:FF:000007">
    <property type="entry name" value="Insulin-like growth factor-binding protein 2"/>
    <property type="match status" value="1"/>
</dbReference>
<dbReference type="FunFam" id="4.10.800.10:FF:000002">
    <property type="entry name" value="Insulin-like growth factor-binding protein 2"/>
    <property type="match status" value="1"/>
</dbReference>
<dbReference type="Gene3D" id="4.10.40.20">
    <property type="match status" value="1"/>
</dbReference>
<dbReference type="Gene3D" id="4.10.800.10">
    <property type="entry name" value="Thyroglobulin type-1"/>
    <property type="match status" value="1"/>
</dbReference>
<dbReference type="InterPro" id="IPR009030">
    <property type="entry name" value="Growth_fac_rcpt_cys_sf"/>
</dbReference>
<dbReference type="InterPro" id="IPR012210">
    <property type="entry name" value="IGFBP-2"/>
</dbReference>
<dbReference type="InterPro" id="IPR000867">
    <property type="entry name" value="IGFBP-like"/>
</dbReference>
<dbReference type="InterPro" id="IPR022321">
    <property type="entry name" value="IGFBP_1-6_chordata"/>
</dbReference>
<dbReference type="InterPro" id="IPR017891">
    <property type="entry name" value="Insulin_GF-bd_Cys-rich_CS"/>
</dbReference>
<dbReference type="InterPro" id="IPR000716">
    <property type="entry name" value="Thyroglobulin_1"/>
</dbReference>
<dbReference type="InterPro" id="IPR036857">
    <property type="entry name" value="Thyroglobulin_1_sf"/>
</dbReference>
<dbReference type="PANTHER" id="PTHR11551">
    <property type="entry name" value="INSULIN-LIKE GROWTH FACTOR BINDING PROTEIN"/>
    <property type="match status" value="1"/>
</dbReference>
<dbReference type="PANTHER" id="PTHR11551:SF5">
    <property type="entry name" value="INSULIN-LIKE GROWTH FACTOR-BINDING PROTEIN 2"/>
    <property type="match status" value="1"/>
</dbReference>
<dbReference type="Pfam" id="PF00219">
    <property type="entry name" value="IGFBP"/>
    <property type="match status" value="1"/>
</dbReference>
<dbReference type="Pfam" id="PF00086">
    <property type="entry name" value="Thyroglobulin_1"/>
    <property type="match status" value="1"/>
</dbReference>
<dbReference type="PRINTS" id="PR01976">
    <property type="entry name" value="IGFBPFAMILY"/>
</dbReference>
<dbReference type="PRINTS" id="PR01978">
    <property type="entry name" value="IGFBPFAMILY2"/>
</dbReference>
<dbReference type="SMART" id="SM00121">
    <property type="entry name" value="IB"/>
    <property type="match status" value="1"/>
</dbReference>
<dbReference type="SMART" id="SM00211">
    <property type="entry name" value="TY"/>
    <property type="match status" value="1"/>
</dbReference>
<dbReference type="SUPFAM" id="SSF57184">
    <property type="entry name" value="Growth factor receptor domain"/>
    <property type="match status" value="1"/>
</dbReference>
<dbReference type="SUPFAM" id="SSF57610">
    <property type="entry name" value="Thyroglobulin type-1 domain"/>
    <property type="match status" value="1"/>
</dbReference>
<dbReference type="PROSITE" id="PS00222">
    <property type="entry name" value="IGFBP_N_1"/>
    <property type="match status" value="1"/>
</dbReference>
<dbReference type="PROSITE" id="PS51323">
    <property type="entry name" value="IGFBP_N_2"/>
    <property type="match status" value="1"/>
</dbReference>
<dbReference type="PROSITE" id="PS00484">
    <property type="entry name" value="THYROGLOBULIN_1_1"/>
    <property type="match status" value="1"/>
</dbReference>
<dbReference type="PROSITE" id="PS51162">
    <property type="entry name" value="THYROGLOBULIN_1_2"/>
    <property type="match status" value="1"/>
</dbReference>
<gene>
    <name type="primary">IGFBP2</name>
</gene>
<feature type="signal peptide" evidence="1">
    <location>
        <begin position="1"/>
        <end position="36"/>
    </location>
</feature>
<feature type="chain" id="PRO_0000014375" description="Insulin-like growth factor-binding protein 2">
    <location>
        <begin position="37"/>
        <end position="311"/>
    </location>
</feature>
<feature type="domain" description="IGFBP N-terminal" evidence="4">
    <location>
        <begin position="38"/>
        <end position="120"/>
    </location>
</feature>
<feature type="domain" description="Thyroglobulin type-1" evidence="3">
    <location>
        <begin position="209"/>
        <end position="291"/>
    </location>
</feature>
<feature type="region of interest" description="Disordered" evidence="5">
    <location>
        <begin position="112"/>
        <end position="168"/>
    </location>
</feature>
<feature type="region of interest" description="Disordered" evidence="5">
    <location>
        <begin position="188"/>
        <end position="210"/>
    </location>
</feature>
<feature type="short sequence motif" description="Cell attachment site" evidence="2">
    <location>
        <begin position="286"/>
        <end position="288"/>
    </location>
</feature>
<feature type="disulfide bond" evidence="4">
    <location>
        <begin position="42"/>
        <end position="70"/>
    </location>
</feature>
<feature type="disulfide bond" evidence="4">
    <location>
        <begin position="45"/>
        <end position="72"/>
    </location>
</feature>
<feature type="disulfide bond" evidence="4">
    <location>
        <begin position="53"/>
        <end position="73"/>
    </location>
</feature>
<feature type="disulfide bond" evidence="4">
    <location>
        <begin position="61"/>
        <end position="76"/>
    </location>
</feature>
<feature type="disulfide bond" evidence="4">
    <location>
        <begin position="84"/>
        <end position="97"/>
    </location>
</feature>
<feature type="disulfide bond" evidence="4">
    <location>
        <begin position="91"/>
        <end position="117"/>
    </location>
</feature>
<feature type="disulfide bond" evidence="3">
    <location>
        <begin position="212"/>
        <end position="246"/>
    </location>
</feature>
<feature type="disulfide bond" evidence="3">
    <location>
        <begin position="257"/>
        <end position="268"/>
    </location>
</feature>
<feature type="disulfide bond" evidence="3">
    <location>
        <begin position="270"/>
        <end position="291"/>
    </location>
</feature>
<proteinExistence type="evidence at transcript level"/>
<keyword id="KW-1015">Disulfide bond</keyword>
<keyword id="KW-0340">Growth factor binding</keyword>
<keyword id="KW-0341">Growth regulation</keyword>
<keyword id="KW-1185">Reference proteome</keyword>
<keyword id="KW-0964">Secreted</keyword>
<keyword id="KW-0732">Signal</keyword>
<organism>
    <name type="scientific">Gallus gallus</name>
    <name type="common">Chicken</name>
    <dbReference type="NCBI Taxonomy" id="9031"/>
    <lineage>
        <taxon>Eukaryota</taxon>
        <taxon>Metazoa</taxon>
        <taxon>Chordata</taxon>
        <taxon>Craniata</taxon>
        <taxon>Vertebrata</taxon>
        <taxon>Euteleostomi</taxon>
        <taxon>Archelosauria</taxon>
        <taxon>Archosauria</taxon>
        <taxon>Dinosauria</taxon>
        <taxon>Saurischia</taxon>
        <taxon>Theropoda</taxon>
        <taxon>Coelurosauria</taxon>
        <taxon>Aves</taxon>
        <taxon>Neognathae</taxon>
        <taxon>Galloanserae</taxon>
        <taxon>Galliformes</taxon>
        <taxon>Phasianidae</taxon>
        <taxon>Phasianinae</taxon>
        <taxon>Gallus</taxon>
    </lineage>
</organism>
<comment type="function">
    <text evidence="1">Inhibits IGF-mediated growth and developmental rates (By similarity). IGF-binding proteins prolong the half-life of the IGFs and have been shown to either inhibit or stimulate the growth promoting effects of the IGFs on cell culture. They alter the interaction of IGFs with their cell surface receptors.</text>
</comment>
<comment type="subunit">
    <text evidence="1">Binds IGF2 more than IGF1.</text>
</comment>
<comment type="subcellular location">
    <subcellularLocation>
        <location>Secreted</location>
    </subcellularLocation>
</comment>
<comment type="developmental stage">
    <text evidence="6">Expressed in embryonic day-15 eye, brain, skeletal muscle, heart and intestine, but virtually absent from embryonic day-15 liver.</text>
</comment>
<comment type="domain">
    <text evidence="1">The C-terminus is required for IGF-binding and growth inhibition.</text>
</comment>